<organism>
    <name type="scientific">Shigella flexneri</name>
    <dbReference type="NCBI Taxonomy" id="623"/>
    <lineage>
        <taxon>Bacteria</taxon>
        <taxon>Pseudomonadati</taxon>
        <taxon>Pseudomonadota</taxon>
        <taxon>Gammaproteobacteria</taxon>
        <taxon>Enterobacterales</taxon>
        <taxon>Enterobacteriaceae</taxon>
        <taxon>Shigella</taxon>
    </lineage>
</organism>
<sequence>MFRQNLITSAILLMAPLAFSAQSLAESLTVEQRLELLEKALRETQSELKKYKDEEKKKYTPATVNRSVSTNDQGYAANPFPTSSAAKPDAVLVKNEEKNASETGSIYSSMTLKDFSKFVKDEIGFSYNGYYRSGWGTASHGSPKSWAIGSLGRFGNEYSGWFDLQLKQRVYNENGKRVDAVVMIDGNVGQQYSTGWFGDNAGGENFMQFSDMYVTTKGFLPFAPEADFWVGKHGAPKIEIQMLDWKTQRTDAAAGVGLENWKVGPGKIDIALVREDVDDYDRSLQNKQQINTHTIDLRYKDIPLWDKATLMVSGRYVTANESASEKDNQDNNGYYDWKDTWMFGTSLTQKFDKGGFNEFSFLVANNSIARNFGRYAGASPFTTFNGRYYGDHTGGTAVRLTSQGEAYIGDHFIVANAIVYSFGNNIYSYETGAHSDFESIRAVVRPAYIWDQYNQTGVELGYFTQQNKDANSNKFNESGYKTTLFHTFKVNTSMLTSRLEIRFYATYIKALENELDGFTFEDNKDAQFAVGAQAEIWW</sequence>
<gene>
    <name type="primary">bglH</name>
    <name type="ordered locus">SF3737</name>
    <name type="ordered locus">S4035</name>
</gene>
<name>BGLH_SHIFL</name>
<protein>
    <recommendedName>
        <fullName>Putative outer membrane porin BglH</fullName>
    </recommendedName>
</protein>
<dbReference type="EMBL" id="AE005674">
    <property type="protein sequence ID" value="AAN45182.2"/>
    <property type="status" value="ALT_INIT"/>
    <property type="molecule type" value="Genomic_DNA"/>
</dbReference>
<dbReference type="EMBL" id="AE014073">
    <property type="protein sequence ID" value="AAP19015.1"/>
    <property type="status" value="ALT_INIT"/>
    <property type="molecule type" value="Genomic_DNA"/>
</dbReference>
<dbReference type="RefSeq" id="WP_000489690.1">
    <property type="nucleotide sequence ID" value="NZ_UIPU01000180.1"/>
</dbReference>
<dbReference type="SMR" id="Q83J01"/>
<dbReference type="STRING" id="198214.SF3737"/>
<dbReference type="PaxDb" id="198214-SF3737"/>
<dbReference type="KEGG" id="sfl:SF3737"/>
<dbReference type="KEGG" id="sfx:S4035"/>
<dbReference type="PATRIC" id="fig|198214.7.peg.4411"/>
<dbReference type="HOGENOM" id="CLU_032473_2_1_6"/>
<dbReference type="Proteomes" id="UP000001006">
    <property type="component" value="Chromosome"/>
</dbReference>
<dbReference type="Proteomes" id="UP000002673">
    <property type="component" value="Chromosome"/>
</dbReference>
<dbReference type="GO" id="GO:0009279">
    <property type="term" value="C:cell outer membrane"/>
    <property type="evidence" value="ECO:0007669"/>
    <property type="project" value="UniProtKB-SubCell"/>
</dbReference>
<dbReference type="GO" id="GO:0046930">
    <property type="term" value="C:pore complex"/>
    <property type="evidence" value="ECO:0007669"/>
    <property type="project" value="UniProtKB-KW"/>
</dbReference>
<dbReference type="GO" id="GO:0015144">
    <property type="term" value="F:carbohydrate transmembrane transporter activity"/>
    <property type="evidence" value="ECO:0007669"/>
    <property type="project" value="TreeGrafter"/>
</dbReference>
<dbReference type="GO" id="GO:0015288">
    <property type="term" value="F:porin activity"/>
    <property type="evidence" value="ECO:0007669"/>
    <property type="project" value="UniProtKB-KW"/>
</dbReference>
<dbReference type="GO" id="GO:0006811">
    <property type="term" value="P:monoatomic ion transport"/>
    <property type="evidence" value="ECO:0007669"/>
    <property type="project" value="UniProtKB-KW"/>
</dbReference>
<dbReference type="GO" id="GO:0015774">
    <property type="term" value="P:polysaccharide transport"/>
    <property type="evidence" value="ECO:0007669"/>
    <property type="project" value="TreeGrafter"/>
</dbReference>
<dbReference type="CDD" id="cd01346">
    <property type="entry name" value="Maltoporin-like"/>
    <property type="match status" value="1"/>
</dbReference>
<dbReference type="Gene3D" id="2.40.170.10">
    <property type="entry name" value="Porin, LamB type"/>
    <property type="match status" value="1"/>
</dbReference>
<dbReference type="InterPro" id="IPR050286">
    <property type="entry name" value="G_neg_Bact_CarbUptk_Porin"/>
</dbReference>
<dbReference type="InterPro" id="IPR021570">
    <property type="entry name" value="LamB-type_porin_N_dom"/>
</dbReference>
<dbReference type="InterPro" id="IPR003192">
    <property type="entry name" value="Porin_LamB"/>
</dbReference>
<dbReference type="InterPro" id="IPR036998">
    <property type="entry name" value="Porin_LamB_sf"/>
</dbReference>
<dbReference type="PANTHER" id="PTHR38762">
    <property type="entry name" value="CRYPTIC OUTER MEMBRANE PORIN BGLH-RELATED"/>
    <property type="match status" value="1"/>
</dbReference>
<dbReference type="PANTHER" id="PTHR38762:SF1">
    <property type="entry name" value="CRYPTIC OUTER MEMBRANE PORIN BGLH-RELATED"/>
    <property type="match status" value="1"/>
</dbReference>
<dbReference type="Pfam" id="PF02264">
    <property type="entry name" value="LamB"/>
    <property type="match status" value="1"/>
</dbReference>
<dbReference type="Pfam" id="PF11471">
    <property type="entry name" value="Sugarporin_N"/>
    <property type="match status" value="1"/>
</dbReference>
<dbReference type="SUPFAM" id="SSF56935">
    <property type="entry name" value="Porins"/>
    <property type="match status" value="1"/>
</dbReference>
<proteinExistence type="inferred from homology"/>
<accession>Q83J01</accession>
<accession>Q7UB08</accession>
<reference key="1">
    <citation type="journal article" date="2002" name="Nucleic Acids Res.">
        <title>Genome sequence of Shigella flexneri 2a: insights into pathogenicity through comparison with genomes of Escherichia coli K12 and O157.</title>
        <authorList>
            <person name="Jin Q."/>
            <person name="Yuan Z."/>
            <person name="Xu J."/>
            <person name="Wang Y."/>
            <person name="Shen Y."/>
            <person name="Lu W."/>
            <person name="Wang J."/>
            <person name="Liu H."/>
            <person name="Yang J."/>
            <person name="Yang F."/>
            <person name="Zhang X."/>
            <person name="Zhang J."/>
            <person name="Yang G."/>
            <person name="Wu H."/>
            <person name="Qu D."/>
            <person name="Dong J."/>
            <person name="Sun L."/>
            <person name="Xue Y."/>
            <person name="Zhao A."/>
            <person name="Gao Y."/>
            <person name="Zhu J."/>
            <person name="Kan B."/>
            <person name="Ding K."/>
            <person name="Chen S."/>
            <person name="Cheng H."/>
            <person name="Yao Z."/>
            <person name="He B."/>
            <person name="Chen R."/>
            <person name="Ma D."/>
            <person name="Qiang B."/>
            <person name="Wen Y."/>
            <person name="Hou Y."/>
            <person name="Yu J."/>
        </authorList>
    </citation>
    <scope>NUCLEOTIDE SEQUENCE [LARGE SCALE GENOMIC DNA]</scope>
    <source>
        <strain>301 / Serotype 2a</strain>
    </source>
</reference>
<reference key="2">
    <citation type="journal article" date="2003" name="Infect. Immun.">
        <title>Complete genome sequence and comparative genomics of Shigella flexneri serotype 2a strain 2457T.</title>
        <authorList>
            <person name="Wei J."/>
            <person name="Goldberg M.B."/>
            <person name="Burland V."/>
            <person name="Venkatesan M.M."/>
            <person name="Deng W."/>
            <person name="Fournier G."/>
            <person name="Mayhew G.F."/>
            <person name="Plunkett G. III"/>
            <person name="Rose D.J."/>
            <person name="Darling A."/>
            <person name="Mau B."/>
            <person name="Perna N.T."/>
            <person name="Payne S.M."/>
            <person name="Runyen-Janecky L.J."/>
            <person name="Zhou S."/>
            <person name="Schwartz D.C."/>
            <person name="Blattner F.R."/>
        </authorList>
    </citation>
    <scope>NUCLEOTIDE SEQUENCE [LARGE SCALE GENOMIC DNA]</scope>
    <source>
        <strain>ATCC 700930 / 2457T / Serotype 2a</strain>
    </source>
</reference>
<feature type="signal peptide" evidence="1">
    <location>
        <begin position="1"/>
        <end position="25"/>
    </location>
</feature>
<feature type="chain" id="PRO_0000355025" description="Putative outer membrane porin BglH">
    <location>
        <begin position="26"/>
        <end position="538"/>
    </location>
</feature>
<feature type="region of interest" description="Disordered" evidence="2">
    <location>
        <begin position="52"/>
        <end position="82"/>
    </location>
</feature>
<feature type="compositionally biased region" description="Polar residues" evidence="2">
    <location>
        <begin position="62"/>
        <end position="73"/>
    </location>
</feature>
<evidence type="ECO:0000255" key="1"/>
<evidence type="ECO:0000256" key="2">
    <source>
        <dbReference type="SAM" id="MobiDB-lite"/>
    </source>
</evidence>
<evidence type="ECO:0000305" key="3"/>
<keyword id="KW-0998">Cell outer membrane</keyword>
<keyword id="KW-0406">Ion transport</keyword>
<keyword id="KW-0472">Membrane</keyword>
<keyword id="KW-0626">Porin</keyword>
<keyword id="KW-1185">Reference proteome</keyword>
<keyword id="KW-0732">Signal</keyword>
<keyword id="KW-0812">Transmembrane</keyword>
<keyword id="KW-1134">Transmembrane beta strand</keyword>
<keyword id="KW-0813">Transport</keyword>
<comment type="function">
    <text evidence="3">May be a sugar porin with a broad carbohydrate specificity.</text>
</comment>
<comment type="subcellular location">
    <subcellularLocation>
        <location evidence="3">Cell outer membrane</location>
        <topology evidence="3">Multi-pass membrane protein</topology>
    </subcellularLocation>
</comment>
<comment type="similarity">
    <text evidence="3">Belongs to the porin LamB (TC 1.B.3) family.</text>
</comment>
<comment type="sequence caution" evidence="3">
    <conflict type="erroneous initiation">
        <sequence resource="EMBL-CDS" id="AAN45182"/>
    </conflict>
    <text>Extended N-terminus.</text>
</comment>
<comment type="sequence caution" evidence="3">
    <conflict type="erroneous initiation">
        <sequence resource="EMBL-CDS" id="AAP19015"/>
    </conflict>
    <text>Extended N-terminus.</text>
</comment>